<evidence type="ECO:0000250" key="1"/>
<evidence type="ECO:0000255" key="2">
    <source>
        <dbReference type="HAMAP-Rule" id="MF_00100"/>
    </source>
</evidence>
<evidence type="ECO:0000256" key="3">
    <source>
        <dbReference type="SAM" id="MobiDB-lite"/>
    </source>
</evidence>
<proteinExistence type="inferred from homology"/>
<name>IF2_TROW8</name>
<accession>Q83HG7</accession>
<dbReference type="EMBL" id="BX251412">
    <property type="protein sequence ID" value="CAD67278.1"/>
    <property type="molecule type" value="Genomic_DNA"/>
</dbReference>
<dbReference type="SMR" id="Q83HG7"/>
<dbReference type="KEGG" id="tws:TW614"/>
<dbReference type="HOGENOM" id="CLU_006301_9_1_11"/>
<dbReference type="GO" id="GO:0005829">
    <property type="term" value="C:cytosol"/>
    <property type="evidence" value="ECO:0007669"/>
    <property type="project" value="TreeGrafter"/>
</dbReference>
<dbReference type="GO" id="GO:0005525">
    <property type="term" value="F:GTP binding"/>
    <property type="evidence" value="ECO:0007669"/>
    <property type="project" value="UniProtKB-KW"/>
</dbReference>
<dbReference type="GO" id="GO:0003924">
    <property type="term" value="F:GTPase activity"/>
    <property type="evidence" value="ECO:0007669"/>
    <property type="project" value="UniProtKB-UniRule"/>
</dbReference>
<dbReference type="GO" id="GO:0003743">
    <property type="term" value="F:translation initiation factor activity"/>
    <property type="evidence" value="ECO:0007669"/>
    <property type="project" value="UniProtKB-UniRule"/>
</dbReference>
<dbReference type="CDD" id="cd01887">
    <property type="entry name" value="IF2_eIF5B"/>
    <property type="match status" value="1"/>
</dbReference>
<dbReference type="CDD" id="cd03702">
    <property type="entry name" value="IF2_mtIF2_II"/>
    <property type="match status" value="1"/>
</dbReference>
<dbReference type="CDD" id="cd03692">
    <property type="entry name" value="mtIF2_IVc"/>
    <property type="match status" value="1"/>
</dbReference>
<dbReference type="FunFam" id="2.40.30.10:FF:000007">
    <property type="entry name" value="Translation initiation factor IF-2"/>
    <property type="match status" value="1"/>
</dbReference>
<dbReference type="FunFam" id="2.40.30.10:FF:000008">
    <property type="entry name" value="Translation initiation factor IF-2"/>
    <property type="match status" value="1"/>
</dbReference>
<dbReference type="FunFam" id="3.40.50.10050:FF:000001">
    <property type="entry name" value="Translation initiation factor IF-2"/>
    <property type="match status" value="1"/>
</dbReference>
<dbReference type="FunFam" id="3.40.50.300:FF:000019">
    <property type="entry name" value="Translation initiation factor IF-2"/>
    <property type="match status" value="1"/>
</dbReference>
<dbReference type="Gene3D" id="1.10.10.2480">
    <property type="match status" value="1"/>
</dbReference>
<dbReference type="Gene3D" id="3.40.50.300">
    <property type="entry name" value="P-loop containing nucleotide triphosphate hydrolases"/>
    <property type="match status" value="1"/>
</dbReference>
<dbReference type="Gene3D" id="2.40.30.10">
    <property type="entry name" value="Translation factors"/>
    <property type="match status" value="2"/>
</dbReference>
<dbReference type="Gene3D" id="3.40.50.10050">
    <property type="entry name" value="Translation initiation factor IF- 2, domain 3"/>
    <property type="match status" value="1"/>
</dbReference>
<dbReference type="HAMAP" id="MF_00100_B">
    <property type="entry name" value="IF_2_B"/>
    <property type="match status" value="1"/>
</dbReference>
<dbReference type="InterPro" id="IPR053905">
    <property type="entry name" value="EF-G-like_DII"/>
</dbReference>
<dbReference type="InterPro" id="IPR004161">
    <property type="entry name" value="EFTu-like_2"/>
</dbReference>
<dbReference type="InterPro" id="IPR044145">
    <property type="entry name" value="IF2_II"/>
</dbReference>
<dbReference type="InterPro" id="IPR006847">
    <property type="entry name" value="IF2_N"/>
</dbReference>
<dbReference type="InterPro" id="IPR027417">
    <property type="entry name" value="P-loop_NTPase"/>
</dbReference>
<dbReference type="InterPro" id="IPR005225">
    <property type="entry name" value="Small_GTP-bd"/>
</dbReference>
<dbReference type="InterPro" id="IPR000795">
    <property type="entry name" value="T_Tr_GTP-bd_dom"/>
</dbReference>
<dbReference type="InterPro" id="IPR000178">
    <property type="entry name" value="TF_IF2_bacterial-like"/>
</dbReference>
<dbReference type="InterPro" id="IPR015760">
    <property type="entry name" value="TIF_IF2"/>
</dbReference>
<dbReference type="InterPro" id="IPR023115">
    <property type="entry name" value="TIF_IF2_dom3"/>
</dbReference>
<dbReference type="InterPro" id="IPR036925">
    <property type="entry name" value="TIF_IF2_dom3_sf"/>
</dbReference>
<dbReference type="InterPro" id="IPR009000">
    <property type="entry name" value="Transl_B-barrel_sf"/>
</dbReference>
<dbReference type="NCBIfam" id="TIGR00487">
    <property type="entry name" value="IF-2"/>
    <property type="match status" value="1"/>
</dbReference>
<dbReference type="NCBIfam" id="TIGR00231">
    <property type="entry name" value="small_GTP"/>
    <property type="match status" value="1"/>
</dbReference>
<dbReference type="PANTHER" id="PTHR43381:SF5">
    <property type="entry name" value="TR-TYPE G DOMAIN-CONTAINING PROTEIN"/>
    <property type="match status" value="1"/>
</dbReference>
<dbReference type="PANTHER" id="PTHR43381">
    <property type="entry name" value="TRANSLATION INITIATION FACTOR IF-2-RELATED"/>
    <property type="match status" value="1"/>
</dbReference>
<dbReference type="Pfam" id="PF22042">
    <property type="entry name" value="EF-G_D2"/>
    <property type="match status" value="1"/>
</dbReference>
<dbReference type="Pfam" id="PF00009">
    <property type="entry name" value="GTP_EFTU"/>
    <property type="match status" value="1"/>
</dbReference>
<dbReference type="Pfam" id="PF03144">
    <property type="entry name" value="GTP_EFTU_D2"/>
    <property type="match status" value="1"/>
</dbReference>
<dbReference type="Pfam" id="PF11987">
    <property type="entry name" value="IF-2"/>
    <property type="match status" value="1"/>
</dbReference>
<dbReference type="Pfam" id="PF04760">
    <property type="entry name" value="IF2_N"/>
    <property type="match status" value="2"/>
</dbReference>
<dbReference type="SUPFAM" id="SSF52156">
    <property type="entry name" value="Initiation factor IF2/eIF5b, domain 3"/>
    <property type="match status" value="1"/>
</dbReference>
<dbReference type="SUPFAM" id="SSF52540">
    <property type="entry name" value="P-loop containing nucleoside triphosphate hydrolases"/>
    <property type="match status" value="1"/>
</dbReference>
<dbReference type="SUPFAM" id="SSF50447">
    <property type="entry name" value="Translation proteins"/>
    <property type="match status" value="2"/>
</dbReference>
<dbReference type="PROSITE" id="PS51722">
    <property type="entry name" value="G_TR_2"/>
    <property type="match status" value="1"/>
</dbReference>
<dbReference type="PROSITE" id="PS01176">
    <property type="entry name" value="IF2"/>
    <property type="match status" value="1"/>
</dbReference>
<comment type="function">
    <text evidence="2">One of the essential components for the initiation of protein synthesis. Protects formylmethionyl-tRNA from spontaneous hydrolysis and promotes its binding to the 30S ribosomal subunits. Also involved in the hydrolysis of GTP during the formation of the 70S ribosomal complex.</text>
</comment>
<comment type="subcellular location">
    <subcellularLocation>
        <location evidence="2">Cytoplasm</location>
    </subcellularLocation>
</comment>
<comment type="similarity">
    <text evidence="2">Belongs to the TRAFAC class translation factor GTPase superfamily. Classic translation factor GTPase family. IF-2 subfamily.</text>
</comment>
<reference key="1">
    <citation type="journal article" date="2003" name="Lancet">
        <title>Sequencing and analysis of the genome of the Whipple's disease bacterium Tropheryma whipplei.</title>
        <authorList>
            <person name="Bentley S.D."/>
            <person name="Maiwald M."/>
            <person name="Murphy L.D."/>
            <person name="Pallen M.J."/>
            <person name="Yeats C.A."/>
            <person name="Dover L.G."/>
            <person name="Norbertczak H.T."/>
            <person name="Besra G.S."/>
            <person name="Quail M.A."/>
            <person name="Harris D.E."/>
            <person name="von Herbay A."/>
            <person name="Goble A."/>
            <person name="Rutter S."/>
            <person name="Squares R."/>
            <person name="Squares S."/>
            <person name="Barrell B.G."/>
            <person name="Parkhill J."/>
            <person name="Relman D.A."/>
        </authorList>
    </citation>
    <scope>NUCLEOTIDE SEQUENCE [LARGE SCALE GENOMIC DNA]</scope>
    <source>
        <strain>TW08/27</strain>
    </source>
</reference>
<organism>
    <name type="scientific">Tropheryma whipplei (strain TW08/27)</name>
    <name type="common">Whipple's bacillus</name>
    <dbReference type="NCBI Taxonomy" id="218496"/>
    <lineage>
        <taxon>Bacteria</taxon>
        <taxon>Bacillati</taxon>
        <taxon>Actinomycetota</taxon>
        <taxon>Actinomycetes</taxon>
        <taxon>Micrococcales</taxon>
        <taxon>Tropherymataceae</taxon>
        <taxon>Tropheryma</taxon>
    </lineage>
</organism>
<gene>
    <name evidence="2" type="primary">infB</name>
    <name type="ordered locus">TW614</name>
</gene>
<feature type="chain" id="PRO_0000137276" description="Translation initiation factor IF-2">
    <location>
        <begin position="1"/>
        <end position="803"/>
    </location>
</feature>
<feature type="domain" description="tr-type G">
    <location>
        <begin position="300"/>
        <end position="468"/>
    </location>
</feature>
<feature type="region of interest" description="Disordered" evidence="3">
    <location>
        <begin position="65"/>
        <end position="186"/>
    </location>
</feature>
<feature type="region of interest" description="G1" evidence="1">
    <location>
        <begin position="309"/>
        <end position="316"/>
    </location>
</feature>
<feature type="region of interest" description="G2" evidence="1">
    <location>
        <begin position="334"/>
        <end position="338"/>
    </location>
</feature>
<feature type="region of interest" description="G3" evidence="1">
    <location>
        <begin position="355"/>
        <end position="358"/>
    </location>
</feature>
<feature type="region of interest" description="G4" evidence="1">
    <location>
        <begin position="409"/>
        <end position="412"/>
    </location>
</feature>
<feature type="region of interest" description="G5" evidence="1">
    <location>
        <begin position="445"/>
        <end position="447"/>
    </location>
</feature>
<feature type="compositionally biased region" description="Basic and acidic residues" evidence="3">
    <location>
        <begin position="65"/>
        <end position="75"/>
    </location>
</feature>
<feature type="compositionally biased region" description="Basic residues" evidence="3">
    <location>
        <begin position="175"/>
        <end position="185"/>
    </location>
</feature>
<feature type="binding site" evidence="2">
    <location>
        <begin position="309"/>
        <end position="316"/>
    </location>
    <ligand>
        <name>GTP</name>
        <dbReference type="ChEBI" id="CHEBI:37565"/>
    </ligand>
</feature>
<feature type="binding site" evidence="2">
    <location>
        <begin position="355"/>
        <end position="359"/>
    </location>
    <ligand>
        <name>GTP</name>
        <dbReference type="ChEBI" id="CHEBI:37565"/>
    </ligand>
</feature>
<feature type="binding site" evidence="2">
    <location>
        <begin position="409"/>
        <end position="412"/>
    </location>
    <ligand>
        <name>GTP</name>
        <dbReference type="ChEBI" id="CHEBI:37565"/>
    </ligand>
</feature>
<keyword id="KW-0963">Cytoplasm</keyword>
<keyword id="KW-0342">GTP-binding</keyword>
<keyword id="KW-0396">Initiation factor</keyword>
<keyword id="KW-0547">Nucleotide-binding</keyword>
<keyword id="KW-0648">Protein biosynthesis</keyword>
<protein>
    <recommendedName>
        <fullName evidence="2">Translation initiation factor IF-2</fullName>
    </recommendedName>
</protein>
<sequence>MGVGLCGRGIVAKPRLYEVASDLGTDSKTLMGILREMGEFVKSPSSALEPPVVRKLAKAFAEKYPDKVEEKKEHTPPAPVVETPKAPPPLPRPIIRHAVRGVPSGAPRPGNNPYAPRQGMGQLATPGPATKRPVKFKAEGDKKPASTHRRVPAPLPQKRTPLRGRGAPGAFGRGNKPKSRKSKTLKRQEFEMRDAPVIGGVTIPRGDGRVIRLMQGASVTDFAEKIDVLPANLLSVLFHLGEMATATESLDEATFEILAEEIGYKVQIVSPDDEDRALLESFSVNLAAEHAEDSELDLAIRPPVVTIMGHVDHGKTLLLDTIRNTNTLAEESGGITQHIGAYQVSVGDRFVTFIDTPGHEAFTAMRARGAKVTDIAVLVVAADDGIMPQTIEALDHARSADVPIVVAVNKIDKEGANPAKIRQQMTEFDVIPEEYGGDVMFIDISAKTGQGVDALLEAILLTADAALELRANPDRTARGVTIEAKLDAGRGAVATVLVQSGTLRVGDRVVTGCAYGRVRAMVDENGLPVESAPPSRPVRVQGLSSVPKAGDSFIVVAEDRQARQIAEKREANERNAQLAKSRKRVSLEDFTRAIQEGRVQSLNMIIKGDVSGAVEALEESLSKLDVGEEVSLRIIHRGVGAITESDVNLATVDNAVVIGFNVRPDRKARDRAAREGVDVRFYSVIYDAIEDIEKSLKGLLKPELEERKLGLAIVKEVFHSSRVGTIAGCSVESGSITRNAKARLIRDGVVVVSDLTVTSLRRFKDDVTEVKSGFECGVGLGSCDDIRIGDEIETIQIVEKPRA</sequence>